<protein>
    <recommendedName>
        <fullName evidence="1">Tryptophan synthase alpha chain</fullName>
        <ecNumber evidence="1">4.2.1.20</ecNumber>
    </recommendedName>
</protein>
<accession>B4SEN7</accession>
<comment type="function">
    <text evidence="1">The alpha subunit is responsible for the aldol cleavage of indoleglycerol phosphate to indole and glyceraldehyde 3-phosphate.</text>
</comment>
<comment type="catalytic activity">
    <reaction evidence="1">
        <text>(1S,2R)-1-C-(indol-3-yl)glycerol 3-phosphate + L-serine = D-glyceraldehyde 3-phosphate + L-tryptophan + H2O</text>
        <dbReference type="Rhea" id="RHEA:10532"/>
        <dbReference type="ChEBI" id="CHEBI:15377"/>
        <dbReference type="ChEBI" id="CHEBI:33384"/>
        <dbReference type="ChEBI" id="CHEBI:57912"/>
        <dbReference type="ChEBI" id="CHEBI:58866"/>
        <dbReference type="ChEBI" id="CHEBI:59776"/>
        <dbReference type="EC" id="4.2.1.20"/>
    </reaction>
</comment>
<comment type="pathway">
    <text evidence="1">Amino-acid biosynthesis; L-tryptophan biosynthesis; L-tryptophan from chorismate: step 5/5.</text>
</comment>
<comment type="subunit">
    <text evidence="1">Tetramer of two alpha and two beta chains.</text>
</comment>
<comment type="similarity">
    <text evidence="1">Belongs to the TrpA family.</text>
</comment>
<evidence type="ECO:0000255" key="1">
    <source>
        <dbReference type="HAMAP-Rule" id="MF_00131"/>
    </source>
</evidence>
<dbReference type="EC" id="4.2.1.20" evidence="1"/>
<dbReference type="EMBL" id="CP001110">
    <property type="protein sequence ID" value="ACF43129.1"/>
    <property type="molecule type" value="Genomic_DNA"/>
</dbReference>
<dbReference type="RefSeq" id="WP_012507624.1">
    <property type="nucleotide sequence ID" value="NC_011060.1"/>
</dbReference>
<dbReference type="SMR" id="B4SEN7"/>
<dbReference type="STRING" id="324925.Ppha_0840"/>
<dbReference type="KEGG" id="pph:Ppha_0840"/>
<dbReference type="eggNOG" id="COG0159">
    <property type="taxonomic scope" value="Bacteria"/>
</dbReference>
<dbReference type="HOGENOM" id="CLU_016734_0_0_10"/>
<dbReference type="OrthoDB" id="9804578at2"/>
<dbReference type="UniPathway" id="UPA00035">
    <property type="reaction ID" value="UER00044"/>
</dbReference>
<dbReference type="Proteomes" id="UP000002724">
    <property type="component" value="Chromosome"/>
</dbReference>
<dbReference type="GO" id="GO:0005829">
    <property type="term" value="C:cytosol"/>
    <property type="evidence" value="ECO:0007669"/>
    <property type="project" value="TreeGrafter"/>
</dbReference>
<dbReference type="GO" id="GO:0004834">
    <property type="term" value="F:tryptophan synthase activity"/>
    <property type="evidence" value="ECO:0007669"/>
    <property type="project" value="UniProtKB-UniRule"/>
</dbReference>
<dbReference type="CDD" id="cd04724">
    <property type="entry name" value="Tryptophan_synthase_alpha"/>
    <property type="match status" value="1"/>
</dbReference>
<dbReference type="FunFam" id="3.20.20.70:FF:000037">
    <property type="entry name" value="Tryptophan synthase alpha chain"/>
    <property type="match status" value="1"/>
</dbReference>
<dbReference type="Gene3D" id="3.20.20.70">
    <property type="entry name" value="Aldolase class I"/>
    <property type="match status" value="1"/>
</dbReference>
<dbReference type="HAMAP" id="MF_00131">
    <property type="entry name" value="Trp_synth_alpha"/>
    <property type="match status" value="1"/>
</dbReference>
<dbReference type="InterPro" id="IPR013785">
    <property type="entry name" value="Aldolase_TIM"/>
</dbReference>
<dbReference type="InterPro" id="IPR011060">
    <property type="entry name" value="RibuloseP-bd_barrel"/>
</dbReference>
<dbReference type="InterPro" id="IPR018204">
    <property type="entry name" value="Trp_synthase_alpha_AS"/>
</dbReference>
<dbReference type="InterPro" id="IPR002028">
    <property type="entry name" value="Trp_synthase_suA"/>
</dbReference>
<dbReference type="NCBIfam" id="TIGR00262">
    <property type="entry name" value="trpA"/>
    <property type="match status" value="1"/>
</dbReference>
<dbReference type="PANTHER" id="PTHR43406:SF1">
    <property type="entry name" value="TRYPTOPHAN SYNTHASE ALPHA CHAIN, CHLOROPLASTIC"/>
    <property type="match status" value="1"/>
</dbReference>
<dbReference type="PANTHER" id="PTHR43406">
    <property type="entry name" value="TRYPTOPHAN SYNTHASE, ALPHA CHAIN"/>
    <property type="match status" value="1"/>
</dbReference>
<dbReference type="Pfam" id="PF00290">
    <property type="entry name" value="Trp_syntA"/>
    <property type="match status" value="1"/>
</dbReference>
<dbReference type="SUPFAM" id="SSF51366">
    <property type="entry name" value="Ribulose-phoshate binding barrel"/>
    <property type="match status" value="1"/>
</dbReference>
<dbReference type="PROSITE" id="PS00167">
    <property type="entry name" value="TRP_SYNTHASE_ALPHA"/>
    <property type="match status" value="1"/>
</dbReference>
<keyword id="KW-0028">Amino-acid biosynthesis</keyword>
<keyword id="KW-0057">Aromatic amino acid biosynthesis</keyword>
<keyword id="KW-0456">Lyase</keyword>
<keyword id="KW-1185">Reference proteome</keyword>
<keyword id="KW-0822">Tryptophan biosynthesis</keyword>
<name>TRPA_PELPB</name>
<reference key="1">
    <citation type="submission" date="2008-06" db="EMBL/GenBank/DDBJ databases">
        <title>Complete sequence of Pelodictyon phaeoclathratiforme BU-1.</title>
        <authorList>
            <consortium name="US DOE Joint Genome Institute"/>
            <person name="Lucas S."/>
            <person name="Copeland A."/>
            <person name="Lapidus A."/>
            <person name="Glavina del Rio T."/>
            <person name="Dalin E."/>
            <person name="Tice H."/>
            <person name="Bruce D."/>
            <person name="Goodwin L."/>
            <person name="Pitluck S."/>
            <person name="Schmutz J."/>
            <person name="Larimer F."/>
            <person name="Land M."/>
            <person name="Hauser L."/>
            <person name="Kyrpides N."/>
            <person name="Mikhailova N."/>
            <person name="Liu Z."/>
            <person name="Li T."/>
            <person name="Zhao F."/>
            <person name="Overmann J."/>
            <person name="Bryant D.A."/>
            <person name="Richardson P."/>
        </authorList>
    </citation>
    <scope>NUCLEOTIDE SEQUENCE [LARGE SCALE GENOMIC DNA]</scope>
    <source>
        <strain>DSM 5477 / BU-1</strain>
    </source>
</reference>
<organism>
    <name type="scientific">Pelodictyon phaeoclathratiforme (strain DSM 5477 / BU-1)</name>
    <dbReference type="NCBI Taxonomy" id="324925"/>
    <lineage>
        <taxon>Bacteria</taxon>
        <taxon>Pseudomonadati</taxon>
        <taxon>Chlorobiota</taxon>
        <taxon>Chlorobiia</taxon>
        <taxon>Chlorobiales</taxon>
        <taxon>Chlorobiaceae</taxon>
        <taxon>Chlorobium/Pelodictyon group</taxon>
        <taxon>Pelodictyon</taxon>
    </lineage>
</organism>
<proteinExistence type="inferred from homology"/>
<gene>
    <name evidence="1" type="primary">trpA</name>
    <name type="ordered locus">Ppha_0840</name>
</gene>
<feature type="chain" id="PRO_1000095736" description="Tryptophan synthase alpha chain">
    <location>
        <begin position="1"/>
        <end position="267"/>
    </location>
</feature>
<feature type="active site" description="Proton acceptor" evidence="1">
    <location>
        <position position="47"/>
    </location>
</feature>
<feature type="active site" description="Proton acceptor" evidence="1">
    <location>
        <position position="58"/>
    </location>
</feature>
<sequence>MSENRITQLVKQDKKFLIAYYMPEFPVTGSTLPVLEALEESGVDIIELGMPYSDPIGDGPVIQDAAHTAIRNGVTIKYLLELVRRARQGEGCKKITAPILLMGYCNPLIAYGGDCFLHDALEAGVDGLLIPDLPPEEAADFLEKAKGFGLTVVFLVSPVTPPERIELIDSLSTDFSYCLAVNGTTGTAKLSDTATESAVDDYLKRVRQHARKKFVVGFGIKDKAQVEHMWNFADGAVVGSALLQYIAASATPEETARLAAEFWKTLR</sequence>